<dbReference type="EC" id="5.3.1.28" evidence="1"/>
<dbReference type="EMBL" id="CP000926">
    <property type="protein sequence ID" value="ABZ00412.1"/>
    <property type="molecule type" value="Genomic_DNA"/>
</dbReference>
<dbReference type="RefSeq" id="WP_012274070.1">
    <property type="nucleotide sequence ID" value="NC_010322.1"/>
</dbReference>
<dbReference type="SMR" id="B0KFT9"/>
<dbReference type="KEGG" id="ppg:PputGB1_4525"/>
<dbReference type="eggNOG" id="COG0279">
    <property type="taxonomic scope" value="Bacteria"/>
</dbReference>
<dbReference type="HOGENOM" id="CLU_080999_3_1_6"/>
<dbReference type="UniPathway" id="UPA00041">
    <property type="reaction ID" value="UER00436"/>
</dbReference>
<dbReference type="Proteomes" id="UP000002157">
    <property type="component" value="Chromosome"/>
</dbReference>
<dbReference type="GO" id="GO:0005737">
    <property type="term" value="C:cytoplasm"/>
    <property type="evidence" value="ECO:0007669"/>
    <property type="project" value="UniProtKB-SubCell"/>
</dbReference>
<dbReference type="GO" id="GO:0097367">
    <property type="term" value="F:carbohydrate derivative binding"/>
    <property type="evidence" value="ECO:0007669"/>
    <property type="project" value="InterPro"/>
</dbReference>
<dbReference type="GO" id="GO:0008968">
    <property type="term" value="F:D-sedoheptulose 7-phosphate isomerase activity"/>
    <property type="evidence" value="ECO:0007669"/>
    <property type="project" value="UniProtKB-UniRule"/>
</dbReference>
<dbReference type="GO" id="GO:0008270">
    <property type="term" value="F:zinc ion binding"/>
    <property type="evidence" value="ECO:0007669"/>
    <property type="project" value="UniProtKB-UniRule"/>
</dbReference>
<dbReference type="GO" id="GO:0005975">
    <property type="term" value="P:carbohydrate metabolic process"/>
    <property type="evidence" value="ECO:0007669"/>
    <property type="project" value="UniProtKB-UniRule"/>
</dbReference>
<dbReference type="GO" id="GO:2001061">
    <property type="term" value="P:D-glycero-D-manno-heptose 7-phosphate biosynthetic process"/>
    <property type="evidence" value="ECO:0007669"/>
    <property type="project" value="UniProtKB-UniPathway"/>
</dbReference>
<dbReference type="CDD" id="cd05006">
    <property type="entry name" value="SIS_GmhA"/>
    <property type="match status" value="1"/>
</dbReference>
<dbReference type="Gene3D" id="3.40.50.10490">
    <property type="entry name" value="Glucose-6-phosphate isomerase like protein, domain 1"/>
    <property type="match status" value="1"/>
</dbReference>
<dbReference type="HAMAP" id="MF_00067">
    <property type="entry name" value="GmhA"/>
    <property type="match status" value="1"/>
</dbReference>
<dbReference type="InterPro" id="IPR035461">
    <property type="entry name" value="GmhA/DiaA"/>
</dbReference>
<dbReference type="InterPro" id="IPR004515">
    <property type="entry name" value="Phosphoheptose_Isoase"/>
</dbReference>
<dbReference type="InterPro" id="IPR001347">
    <property type="entry name" value="SIS_dom"/>
</dbReference>
<dbReference type="InterPro" id="IPR046348">
    <property type="entry name" value="SIS_dom_sf"/>
</dbReference>
<dbReference type="InterPro" id="IPR050099">
    <property type="entry name" value="SIS_GmhA/DiaA_subfam"/>
</dbReference>
<dbReference type="NCBIfam" id="NF010546">
    <property type="entry name" value="PRK13936.1"/>
    <property type="match status" value="1"/>
</dbReference>
<dbReference type="PANTHER" id="PTHR30390:SF6">
    <property type="entry name" value="DNAA INITIATOR-ASSOCIATING PROTEIN DIAA"/>
    <property type="match status" value="1"/>
</dbReference>
<dbReference type="PANTHER" id="PTHR30390">
    <property type="entry name" value="SEDOHEPTULOSE 7-PHOSPHATE ISOMERASE / DNAA INITIATOR-ASSOCIATING FACTOR FOR REPLICATION INITIATION"/>
    <property type="match status" value="1"/>
</dbReference>
<dbReference type="Pfam" id="PF13580">
    <property type="entry name" value="SIS_2"/>
    <property type="match status" value="1"/>
</dbReference>
<dbReference type="SUPFAM" id="SSF53697">
    <property type="entry name" value="SIS domain"/>
    <property type="match status" value="1"/>
</dbReference>
<dbReference type="PROSITE" id="PS51464">
    <property type="entry name" value="SIS"/>
    <property type="match status" value="1"/>
</dbReference>
<proteinExistence type="inferred from homology"/>
<comment type="function">
    <text evidence="1">Catalyzes the isomerization of sedoheptulose 7-phosphate in D-glycero-D-manno-heptose 7-phosphate.</text>
</comment>
<comment type="catalytic activity">
    <reaction evidence="1">
        <text>2 D-sedoheptulose 7-phosphate = D-glycero-alpha-D-manno-heptose 7-phosphate + D-glycero-beta-D-manno-heptose 7-phosphate</text>
        <dbReference type="Rhea" id="RHEA:27489"/>
        <dbReference type="ChEBI" id="CHEBI:57483"/>
        <dbReference type="ChEBI" id="CHEBI:60203"/>
        <dbReference type="ChEBI" id="CHEBI:60204"/>
        <dbReference type="EC" id="5.3.1.28"/>
    </reaction>
</comment>
<comment type="cofactor">
    <cofactor evidence="1">
        <name>Zn(2+)</name>
        <dbReference type="ChEBI" id="CHEBI:29105"/>
    </cofactor>
    <text evidence="1">Binds 1 zinc ion per subunit.</text>
</comment>
<comment type="pathway">
    <text evidence="1">Carbohydrate biosynthesis; D-glycero-D-manno-heptose 7-phosphate biosynthesis; D-glycero-alpha-D-manno-heptose 7-phosphate and D-glycero-beta-D-manno-heptose 7-phosphate from sedoheptulose 7-phosphate: step 1/1.</text>
</comment>
<comment type="subunit">
    <text evidence="1">Homotetramer.</text>
</comment>
<comment type="subcellular location">
    <subcellularLocation>
        <location evidence="1">Cytoplasm</location>
    </subcellularLocation>
</comment>
<comment type="miscellaneous">
    <text evidence="1">The reaction produces a racemic mixture of D-glycero-alpha-D-manno-heptose 7-phosphate and D-glycero-beta-D-manno-heptose 7-phosphate.</text>
</comment>
<comment type="similarity">
    <text evidence="1">Belongs to the SIS family. GmhA subfamily.</text>
</comment>
<feature type="chain" id="PRO_1000075101" description="Phosphoheptose isomerase">
    <location>
        <begin position="1"/>
        <end position="197"/>
    </location>
</feature>
<feature type="domain" description="SIS" evidence="1">
    <location>
        <begin position="36"/>
        <end position="197"/>
    </location>
</feature>
<feature type="binding site" evidence="1">
    <location>
        <begin position="51"/>
        <end position="53"/>
    </location>
    <ligand>
        <name>substrate</name>
    </ligand>
</feature>
<feature type="binding site" evidence="1">
    <location>
        <position position="60"/>
    </location>
    <ligand>
        <name>Zn(2+)</name>
        <dbReference type="ChEBI" id="CHEBI:29105"/>
    </ligand>
</feature>
<feature type="binding site" evidence="1">
    <location>
        <position position="64"/>
    </location>
    <ligand>
        <name>substrate</name>
    </ligand>
</feature>
<feature type="binding site" evidence="1">
    <location>
        <position position="64"/>
    </location>
    <ligand>
        <name>Zn(2+)</name>
        <dbReference type="ChEBI" id="CHEBI:29105"/>
    </ligand>
</feature>
<feature type="binding site" evidence="1">
    <location>
        <begin position="93"/>
        <end position="94"/>
    </location>
    <ligand>
        <name>substrate</name>
    </ligand>
</feature>
<feature type="binding site" evidence="1">
    <location>
        <begin position="119"/>
        <end position="121"/>
    </location>
    <ligand>
        <name>substrate</name>
    </ligand>
</feature>
<feature type="binding site" evidence="1">
    <location>
        <position position="124"/>
    </location>
    <ligand>
        <name>substrate</name>
    </ligand>
</feature>
<feature type="binding site" evidence="1">
    <location>
        <position position="174"/>
    </location>
    <ligand>
        <name>substrate</name>
    </ligand>
</feature>
<feature type="binding site" evidence="1">
    <location>
        <position position="174"/>
    </location>
    <ligand>
        <name>Zn(2+)</name>
        <dbReference type="ChEBI" id="CHEBI:29105"/>
    </ligand>
</feature>
<feature type="binding site" evidence="1">
    <location>
        <position position="182"/>
    </location>
    <ligand>
        <name>Zn(2+)</name>
        <dbReference type="ChEBI" id="CHEBI:29105"/>
    </ligand>
</feature>
<name>GMHA_PSEPG</name>
<reference key="1">
    <citation type="submission" date="2008-01" db="EMBL/GenBank/DDBJ databases">
        <title>Complete sequence of Pseudomonas putida GB-1.</title>
        <authorList>
            <consortium name="US DOE Joint Genome Institute"/>
            <person name="Copeland A."/>
            <person name="Lucas S."/>
            <person name="Lapidus A."/>
            <person name="Barry K."/>
            <person name="Glavina del Rio T."/>
            <person name="Dalin E."/>
            <person name="Tice H."/>
            <person name="Pitluck S."/>
            <person name="Bruce D."/>
            <person name="Goodwin L."/>
            <person name="Chertkov O."/>
            <person name="Brettin T."/>
            <person name="Detter J.C."/>
            <person name="Han C."/>
            <person name="Kuske C.R."/>
            <person name="Schmutz J."/>
            <person name="Larimer F."/>
            <person name="Land M."/>
            <person name="Hauser L."/>
            <person name="Kyrpides N."/>
            <person name="Kim E."/>
            <person name="McCarthy J.K."/>
            <person name="Richardson P."/>
        </authorList>
    </citation>
    <scope>NUCLEOTIDE SEQUENCE [LARGE SCALE GENOMIC DNA]</scope>
    <source>
        <strain>GB-1</strain>
    </source>
</reference>
<evidence type="ECO:0000255" key="1">
    <source>
        <dbReference type="HAMAP-Rule" id="MF_00067"/>
    </source>
</evidence>
<accession>B0KFT9</accession>
<protein>
    <recommendedName>
        <fullName evidence="1">Phosphoheptose isomerase</fullName>
        <ecNumber evidence="1">5.3.1.28</ecNumber>
    </recommendedName>
    <alternativeName>
        <fullName evidence="1">Sedoheptulose 7-phosphate isomerase</fullName>
    </alternativeName>
</protein>
<sequence length="197" mass="21249">MDMQSRIRRLFQASIDTKQQAMDILAPHIEQASLVMVNALLNEGKMLACGNGGSAGDAQHFSSELLNRFERERPSLPAIALTTDSSTLTSIANDYSYNEVFSKQIRALGQPGDVLLAISTSGNSANVIQAIQAAHDREMIVVALTGRDGGGMASLLLPEDVEIRVPSTVTARIQEVHLLAIHCLCDLIDSQLFGSEE</sequence>
<gene>
    <name evidence="1" type="primary">gmhA</name>
    <name type="ordered locus">PputGB1_4525</name>
</gene>
<keyword id="KW-0119">Carbohydrate metabolism</keyword>
<keyword id="KW-0963">Cytoplasm</keyword>
<keyword id="KW-0413">Isomerase</keyword>
<keyword id="KW-0479">Metal-binding</keyword>
<keyword id="KW-0862">Zinc</keyword>
<organism>
    <name type="scientific">Pseudomonas putida (strain GB-1)</name>
    <dbReference type="NCBI Taxonomy" id="76869"/>
    <lineage>
        <taxon>Bacteria</taxon>
        <taxon>Pseudomonadati</taxon>
        <taxon>Pseudomonadota</taxon>
        <taxon>Gammaproteobacteria</taxon>
        <taxon>Pseudomonadales</taxon>
        <taxon>Pseudomonadaceae</taxon>
        <taxon>Pseudomonas</taxon>
    </lineage>
</organism>